<name>HAS1_CRYNB</name>
<organism>
    <name type="scientific">Cryptococcus neoformans var. neoformans serotype D (strain B-3501A)</name>
    <name type="common">Filobasidiella neoformans</name>
    <dbReference type="NCBI Taxonomy" id="283643"/>
    <lineage>
        <taxon>Eukaryota</taxon>
        <taxon>Fungi</taxon>
        <taxon>Dikarya</taxon>
        <taxon>Basidiomycota</taxon>
        <taxon>Agaricomycotina</taxon>
        <taxon>Tremellomycetes</taxon>
        <taxon>Tremellales</taxon>
        <taxon>Cryptococcaceae</taxon>
        <taxon>Cryptococcus</taxon>
        <taxon>Cryptococcus neoformans species complex</taxon>
    </lineage>
</organism>
<gene>
    <name type="primary">HAS1</name>
    <name type="ordered locus">CNBB4650</name>
</gene>
<comment type="function">
    <text>ATP-dependent RNA helicase involved in 40S ribosomal subunit biogenesis. Required for the processing and cleavage of 35S pre-rRNA at sites A0, A1, and A2, leading to mature 18S rRNA.</text>
</comment>
<comment type="catalytic activity">
    <reaction>
        <text>ATP + H2O = ADP + phosphate + H(+)</text>
        <dbReference type="Rhea" id="RHEA:13065"/>
        <dbReference type="ChEBI" id="CHEBI:15377"/>
        <dbReference type="ChEBI" id="CHEBI:15378"/>
        <dbReference type="ChEBI" id="CHEBI:30616"/>
        <dbReference type="ChEBI" id="CHEBI:43474"/>
        <dbReference type="ChEBI" id="CHEBI:456216"/>
        <dbReference type="EC" id="3.6.4.13"/>
    </reaction>
</comment>
<comment type="subunit">
    <text evidence="1">Associates in the nucleolus with the 60S and pre-60S ribosomal subunits.</text>
</comment>
<comment type="subcellular location">
    <subcellularLocation>
        <location evidence="1">Nucleus</location>
        <location evidence="1">Nucleolus</location>
    </subcellularLocation>
</comment>
<comment type="domain">
    <text>The Q motif is unique to and characteristic of the DEAD box family of RNA helicases and controls ATP binding and hydrolysis.</text>
</comment>
<comment type="similarity">
    <text evidence="5">Belongs to the DEAD box helicase family. DDX18/HAS1 subfamily.</text>
</comment>
<keyword id="KW-0067">ATP-binding</keyword>
<keyword id="KW-0347">Helicase</keyword>
<keyword id="KW-0378">Hydrolase</keyword>
<keyword id="KW-0547">Nucleotide-binding</keyword>
<keyword id="KW-0539">Nucleus</keyword>
<keyword id="KW-0690">Ribosome biogenesis</keyword>
<keyword id="KW-0694">RNA-binding</keyword>
<keyword id="KW-0698">rRNA processing</keyword>
<protein>
    <recommendedName>
        <fullName>ATP-dependent RNA helicase HAS1</fullName>
        <ecNumber>3.6.4.13</ecNumber>
    </recommendedName>
</protein>
<evidence type="ECO:0000250" key="1"/>
<evidence type="ECO:0000255" key="2">
    <source>
        <dbReference type="PROSITE-ProRule" id="PRU00541"/>
    </source>
</evidence>
<evidence type="ECO:0000255" key="3">
    <source>
        <dbReference type="PROSITE-ProRule" id="PRU00542"/>
    </source>
</evidence>
<evidence type="ECO:0000256" key="4">
    <source>
        <dbReference type="SAM" id="MobiDB-lite"/>
    </source>
</evidence>
<evidence type="ECO:0000305" key="5"/>
<dbReference type="EC" id="3.6.4.13"/>
<dbReference type="EMBL" id="AAEY01000010">
    <property type="protein sequence ID" value="EAL22588.1"/>
    <property type="molecule type" value="Genomic_DNA"/>
</dbReference>
<dbReference type="RefSeq" id="XP_777235.1">
    <property type="nucleotide sequence ID" value="XM_772142.1"/>
</dbReference>
<dbReference type="SMR" id="P0CQ85"/>
<dbReference type="EnsemblFungi" id="AAW41805">
    <property type="protein sequence ID" value="AAW41805"/>
    <property type="gene ID" value="CNB01060"/>
</dbReference>
<dbReference type="GeneID" id="4934559"/>
<dbReference type="KEGG" id="cnb:CNBB4650"/>
<dbReference type="VEuPathDB" id="FungiDB:CNBB4650"/>
<dbReference type="HOGENOM" id="CLU_003041_26_5_1"/>
<dbReference type="OrthoDB" id="4878at5206"/>
<dbReference type="GO" id="GO:0005730">
    <property type="term" value="C:nucleolus"/>
    <property type="evidence" value="ECO:0007669"/>
    <property type="project" value="UniProtKB-SubCell"/>
</dbReference>
<dbReference type="GO" id="GO:0005524">
    <property type="term" value="F:ATP binding"/>
    <property type="evidence" value="ECO:0007669"/>
    <property type="project" value="UniProtKB-KW"/>
</dbReference>
<dbReference type="GO" id="GO:0016887">
    <property type="term" value="F:ATP hydrolysis activity"/>
    <property type="evidence" value="ECO:0007669"/>
    <property type="project" value="RHEA"/>
</dbReference>
<dbReference type="GO" id="GO:0003723">
    <property type="term" value="F:RNA binding"/>
    <property type="evidence" value="ECO:0007669"/>
    <property type="project" value="UniProtKB-KW"/>
</dbReference>
<dbReference type="GO" id="GO:0003724">
    <property type="term" value="F:RNA helicase activity"/>
    <property type="evidence" value="ECO:0007669"/>
    <property type="project" value="UniProtKB-EC"/>
</dbReference>
<dbReference type="GO" id="GO:0006364">
    <property type="term" value="P:rRNA processing"/>
    <property type="evidence" value="ECO:0007669"/>
    <property type="project" value="UniProtKB-KW"/>
</dbReference>
<dbReference type="CDD" id="cd17942">
    <property type="entry name" value="DEADc_DDX18"/>
    <property type="match status" value="1"/>
</dbReference>
<dbReference type="CDD" id="cd18787">
    <property type="entry name" value="SF2_C_DEAD"/>
    <property type="match status" value="1"/>
</dbReference>
<dbReference type="FunFam" id="3.40.50.300:FF:000379">
    <property type="entry name" value="RNA helicase"/>
    <property type="match status" value="1"/>
</dbReference>
<dbReference type="FunFam" id="3.40.50.300:FF:000460">
    <property type="entry name" value="RNA helicase"/>
    <property type="match status" value="1"/>
</dbReference>
<dbReference type="Gene3D" id="3.40.50.300">
    <property type="entry name" value="P-loop containing nucleotide triphosphate hydrolases"/>
    <property type="match status" value="2"/>
</dbReference>
<dbReference type="InterPro" id="IPR044773">
    <property type="entry name" value="DDX18/Has1_DEADc"/>
</dbReference>
<dbReference type="InterPro" id="IPR011545">
    <property type="entry name" value="DEAD/DEAH_box_helicase_dom"/>
</dbReference>
<dbReference type="InterPro" id="IPR014001">
    <property type="entry name" value="Helicase_ATP-bd"/>
</dbReference>
<dbReference type="InterPro" id="IPR001650">
    <property type="entry name" value="Helicase_C-like"/>
</dbReference>
<dbReference type="InterPro" id="IPR027417">
    <property type="entry name" value="P-loop_NTPase"/>
</dbReference>
<dbReference type="InterPro" id="IPR000629">
    <property type="entry name" value="RNA-helicase_DEAD-box_CS"/>
</dbReference>
<dbReference type="InterPro" id="IPR014014">
    <property type="entry name" value="RNA_helicase_DEAD_Q_motif"/>
</dbReference>
<dbReference type="InterPro" id="IPR025313">
    <property type="entry name" value="SPB4-like_CTE"/>
</dbReference>
<dbReference type="PANTHER" id="PTHR24031">
    <property type="entry name" value="RNA HELICASE"/>
    <property type="match status" value="1"/>
</dbReference>
<dbReference type="Pfam" id="PF13959">
    <property type="entry name" value="CTE_SPB4"/>
    <property type="match status" value="1"/>
</dbReference>
<dbReference type="Pfam" id="PF00270">
    <property type="entry name" value="DEAD"/>
    <property type="match status" value="1"/>
</dbReference>
<dbReference type="Pfam" id="PF00271">
    <property type="entry name" value="Helicase_C"/>
    <property type="match status" value="1"/>
</dbReference>
<dbReference type="SMART" id="SM00487">
    <property type="entry name" value="DEXDc"/>
    <property type="match status" value="1"/>
</dbReference>
<dbReference type="SMART" id="SM01178">
    <property type="entry name" value="DUF4217"/>
    <property type="match status" value="1"/>
</dbReference>
<dbReference type="SMART" id="SM00490">
    <property type="entry name" value="HELICc"/>
    <property type="match status" value="1"/>
</dbReference>
<dbReference type="SUPFAM" id="SSF52540">
    <property type="entry name" value="P-loop containing nucleoside triphosphate hydrolases"/>
    <property type="match status" value="1"/>
</dbReference>
<dbReference type="PROSITE" id="PS00039">
    <property type="entry name" value="DEAD_ATP_HELICASE"/>
    <property type="match status" value="1"/>
</dbReference>
<dbReference type="PROSITE" id="PS51192">
    <property type="entry name" value="HELICASE_ATP_BIND_1"/>
    <property type="match status" value="1"/>
</dbReference>
<dbReference type="PROSITE" id="PS51194">
    <property type="entry name" value="HELICASE_CTER"/>
    <property type="match status" value="1"/>
</dbReference>
<dbReference type="PROSITE" id="PS51195">
    <property type="entry name" value="Q_MOTIF"/>
    <property type="match status" value="1"/>
</dbReference>
<reference key="1">
    <citation type="journal article" date="2005" name="Science">
        <title>The genome of the basidiomycetous yeast and human pathogen Cryptococcus neoformans.</title>
        <authorList>
            <person name="Loftus B.J."/>
            <person name="Fung E."/>
            <person name="Roncaglia P."/>
            <person name="Rowley D."/>
            <person name="Amedeo P."/>
            <person name="Bruno D."/>
            <person name="Vamathevan J."/>
            <person name="Miranda M."/>
            <person name="Anderson I.J."/>
            <person name="Fraser J.A."/>
            <person name="Allen J.E."/>
            <person name="Bosdet I.E."/>
            <person name="Brent M.R."/>
            <person name="Chiu R."/>
            <person name="Doering T.L."/>
            <person name="Donlin M.J."/>
            <person name="D'Souza C.A."/>
            <person name="Fox D.S."/>
            <person name="Grinberg V."/>
            <person name="Fu J."/>
            <person name="Fukushima M."/>
            <person name="Haas B.J."/>
            <person name="Huang J.C."/>
            <person name="Janbon G."/>
            <person name="Jones S.J.M."/>
            <person name="Koo H.L."/>
            <person name="Krzywinski M.I."/>
            <person name="Kwon-Chung K.J."/>
            <person name="Lengeler K.B."/>
            <person name="Maiti R."/>
            <person name="Marra M.A."/>
            <person name="Marra R.E."/>
            <person name="Mathewson C.A."/>
            <person name="Mitchell T.G."/>
            <person name="Pertea M."/>
            <person name="Riggs F.R."/>
            <person name="Salzberg S.L."/>
            <person name="Schein J.E."/>
            <person name="Shvartsbeyn A."/>
            <person name="Shin H."/>
            <person name="Shumway M."/>
            <person name="Specht C.A."/>
            <person name="Suh B.B."/>
            <person name="Tenney A."/>
            <person name="Utterback T.R."/>
            <person name="Wickes B.L."/>
            <person name="Wortman J.R."/>
            <person name="Wye N.H."/>
            <person name="Kronstad J.W."/>
            <person name="Lodge J.K."/>
            <person name="Heitman J."/>
            <person name="Davis R.W."/>
            <person name="Fraser C.M."/>
            <person name="Hyman R.W."/>
        </authorList>
    </citation>
    <scope>NUCLEOTIDE SEQUENCE [LARGE SCALE GENOMIC DNA]</scope>
    <source>
        <strain>B-3501A</strain>
    </source>
</reference>
<sequence>MERRDRMRISTAQKFGWGSQAQTGRRFVLRIFMVILSLEKLRQGSLLCMTPSHGNAHSSAHRAMSSTKPPTTTNKRKRTSNAHDEAPAKRVPEASSSKVTLDDSQPAPATSSDAVLGARSAPGTDYERVPFSTLNLSPPTTAAIERMGFETMTEVQARTIPPLLAGKDVLGAARTGSGKTMAFLIPSVELLSTLRFKPVNGTGVIIISPTRELALQIFGVAKELMQGHSQTFGVLMGGANRKAEADKLVKGVNLIVATPGRLLDHLQNTKGFVFKNLKALVIDEADRILEIGFEEEMKQIIKLLPSENRQSMLFSATQTTKVTDLARISLRPGPLYINVDETKEASTADMLEQGYVVCESDQRFMLLFTFLKKNLKKKVIVFFSSCNSVKYHAELLNYIDVPVLDLHGKQKQQKRTNTFFEFINAPAGILLCTDVAARGLDIPKVDWIIQFDPPDDPRDYIHRVGRTARAGKSGKSLLFLLPSELGFLRFLKVAKVPLNEYQFPQKKVADVQKQLESLISKNHYLNTSARDGYRSYLQAYASYSLKKIFDVNKLDLAKVGKAFGFAVPPKVNISVGSVKAKKSRDEDESSDDDGQPKKAYYRNRGRK</sequence>
<proteinExistence type="inferred from homology"/>
<accession>P0CQ85</accession>
<accession>Q55X97</accession>
<accession>Q5KMN6</accession>
<feature type="chain" id="PRO_0000410253" description="ATP-dependent RNA helicase HAS1">
    <location>
        <begin position="1"/>
        <end position="607"/>
    </location>
</feature>
<feature type="domain" description="Helicase ATP-binding" evidence="2">
    <location>
        <begin position="160"/>
        <end position="336"/>
    </location>
</feature>
<feature type="domain" description="Helicase C-terminal" evidence="3">
    <location>
        <begin position="350"/>
        <end position="519"/>
    </location>
</feature>
<feature type="region of interest" description="Disordered" evidence="4">
    <location>
        <begin position="52"/>
        <end position="121"/>
    </location>
</feature>
<feature type="region of interest" description="Disordered" evidence="4">
    <location>
        <begin position="576"/>
        <end position="607"/>
    </location>
</feature>
<feature type="short sequence motif" description="Q motif">
    <location>
        <begin position="129"/>
        <end position="157"/>
    </location>
</feature>
<feature type="short sequence motif" description="DEAD box">
    <location>
        <begin position="283"/>
        <end position="286"/>
    </location>
</feature>
<feature type="short sequence motif" description="Bipartite nuclear localization signal" evidence="1">
    <location>
        <begin position="362"/>
        <end position="378"/>
    </location>
</feature>
<feature type="compositionally biased region" description="Basic and acidic residues" evidence="4">
    <location>
        <begin position="81"/>
        <end position="92"/>
    </location>
</feature>
<feature type="compositionally biased region" description="Polar residues" evidence="4">
    <location>
        <begin position="94"/>
        <end position="113"/>
    </location>
</feature>
<feature type="binding site" evidence="2">
    <location>
        <begin position="173"/>
        <end position="180"/>
    </location>
    <ligand>
        <name>ATP</name>
        <dbReference type="ChEBI" id="CHEBI:30616"/>
    </ligand>
</feature>